<name>PSD_RHOP2</name>
<organism>
    <name type="scientific">Rhodopseudomonas palustris (strain HaA2)</name>
    <dbReference type="NCBI Taxonomy" id="316058"/>
    <lineage>
        <taxon>Bacteria</taxon>
        <taxon>Pseudomonadati</taxon>
        <taxon>Pseudomonadota</taxon>
        <taxon>Alphaproteobacteria</taxon>
        <taxon>Hyphomicrobiales</taxon>
        <taxon>Nitrobacteraceae</taxon>
        <taxon>Rhodopseudomonas</taxon>
    </lineage>
</organism>
<protein>
    <recommendedName>
        <fullName evidence="1">Phosphatidylserine decarboxylase proenzyme</fullName>
        <ecNumber evidence="1">4.1.1.65</ecNumber>
    </recommendedName>
    <component>
        <recommendedName>
            <fullName evidence="1">Phosphatidylserine decarboxylase alpha chain</fullName>
        </recommendedName>
    </component>
    <component>
        <recommendedName>
            <fullName evidence="1">Phosphatidylserine decarboxylase beta chain</fullName>
        </recommendedName>
    </component>
</protein>
<accession>Q2IUP7</accession>
<sequence length="232" mass="25041">MSVVNSIRAQIPPIHREGYPFIGAFALATLVLFLIWAPLGWIGTVLTIWCLLFFRDPVRVTPVREGLVVAPADGRVSMVVQIIPPPALGLGDKPLPRVSIFMSVFNCHVNRSPVAGRVERIIYSPGKFINAELDKASEDNERNSLVISTPAGQIGVVQIAGLVARRIVAFVREGQPLAAGERFGLIRFGSRLDVYLPEGAKPLVSEGQTAIAGETVLADFSLGDGGRTYRAD</sequence>
<reference key="1">
    <citation type="submission" date="2006-01" db="EMBL/GenBank/DDBJ databases">
        <title>Complete sequence of Rhodopseudomonas palustris HaA2.</title>
        <authorList>
            <consortium name="US DOE Joint Genome Institute"/>
            <person name="Copeland A."/>
            <person name="Lucas S."/>
            <person name="Lapidus A."/>
            <person name="Barry K."/>
            <person name="Detter J.C."/>
            <person name="Glavina T."/>
            <person name="Hammon N."/>
            <person name="Israni S."/>
            <person name="Pitluck S."/>
            <person name="Chain P."/>
            <person name="Malfatti S."/>
            <person name="Shin M."/>
            <person name="Vergez L."/>
            <person name="Schmutz J."/>
            <person name="Larimer F."/>
            <person name="Land M."/>
            <person name="Hauser L."/>
            <person name="Pelletier D.A."/>
            <person name="Kyrpides N."/>
            <person name="Anderson I."/>
            <person name="Oda Y."/>
            <person name="Harwood C.S."/>
            <person name="Richardson P."/>
        </authorList>
    </citation>
    <scope>NUCLEOTIDE SEQUENCE [LARGE SCALE GENOMIC DNA]</scope>
    <source>
        <strain>HaA2</strain>
    </source>
</reference>
<gene>
    <name evidence="1" type="primary">psd</name>
    <name type="ordered locus">RPB_3367</name>
</gene>
<proteinExistence type="inferred from homology"/>
<evidence type="ECO:0000255" key="1">
    <source>
        <dbReference type="HAMAP-Rule" id="MF_00664"/>
    </source>
</evidence>
<feature type="chain" id="PRO_0000262261" description="Phosphatidylserine decarboxylase beta chain" evidence="1">
    <location>
        <begin position="1"/>
        <end position="189"/>
    </location>
</feature>
<feature type="chain" id="PRO_0000262262" description="Phosphatidylserine decarboxylase alpha chain" evidence="1">
    <location>
        <begin position="190"/>
        <end position="232"/>
    </location>
</feature>
<feature type="active site" description="Schiff-base intermediate with substrate; via pyruvic acid" evidence="1">
    <location>
        <position position="190"/>
    </location>
</feature>
<feature type="site" description="Cleavage (non-hydrolytic); by autocatalysis" evidence="1">
    <location>
        <begin position="189"/>
        <end position="190"/>
    </location>
</feature>
<feature type="modified residue" description="Pyruvic acid (Ser); by autocatalysis" evidence="1">
    <location>
        <position position="190"/>
    </location>
</feature>
<keyword id="KW-1003">Cell membrane</keyword>
<keyword id="KW-0210">Decarboxylase</keyword>
<keyword id="KW-0444">Lipid biosynthesis</keyword>
<keyword id="KW-0443">Lipid metabolism</keyword>
<keyword id="KW-0456">Lyase</keyword>
<keyword id="KW-0472">Membrane</keyword>
<keyword id="KW-0594">Phospholipid biosynthesis</keyword>
<keyword id="KW-1208">Phospholipid metabolism</keyword>
<keyword id="KW-0670">Pyruvate</keyword>
<keyword id="KW-1185">Reference proteome</keyword>
<keyword id="KW-0865">Zymogen</keyword>
<comment type="function">
    <text evidence="1">Catalyzes the formation of phosphatidylethanolamine (PtdEtn) from phosphatidylserine (PtdSer).</text>
</comment>
<comment type="catalytic activity">
    <reaction evidence="1">
        <text>a 1,2-diacyl-sn-glycero-3-phospho-L-serine + H(+) = a 1,2-diacyl-sn-glycero-3-phosphoethanolamine + CO2</text>
        <dbReference type="Rhea" id="RHEA:20828"/>
        <dbReference type="ChEBI" id="CHEBI:15378"/>
        <dbReference type="ChEBI" id="CHEBI:16526"/>
        <dbReference type="ChEBI" id="CHEBI:57262"/>
        <dbReference type="ChEBI" id="CHEBI:64612"/>
        <dbReference type="EC" id="4.1.1.65"/>
    </reaction>
</comment>
<comment type="cofactor">
    <cofactor evidence="1">
        <name>pyruvate</name>
        <dbReference type="ChEBI" id="CHEBI:15361"/>
    </cofactor>
    <text evidence="1">Binds 1 pyruvoyl group covalently per subunit.</text>
</comment>
<comment type="pathway">
    <text evidence="1">Phospholipid metabolism; phosphatidylethanolamine biosynthesis; phosphatidylethanolamine from CDP-diacylglycerol: step 2/2.</text>
</comment>
<comment type="subunit">
    <text evidence="1">Heterodimer of a large membrane-associated beta subunit and a small pyruvoyl-containing alpha subunit.</text>
</comment>
<comment type="subcellular location">
    <subcellularLocation>
        <location evidence="1">Cell membrane</location>
        <topology evidence="1">Peripheral membrane protein</topology>
    </subcellularLocation>
</comment>
<comment type="PTM">
    <text evidence="1">Is synthesized initially as an inactive proenzyme. Formation of the active enzyme involves a self-maturation process in which the active site pyruvoyl group is generated from an internal serine residue via an autocatalytic post-translational modification. Two non-identical subunits are generated from the proenzyme in this reaction, and the pyruvate is formed at the N-terminus of the alpha chain, which is derived from the carboxyl end of the proenzyme. The post-translation cleavage follows an unusual pathway, termed non-hydrolytic serinolysis, in which the side chain hydroxyl group of the serine supplies its oxygen atom to form the C-terminus of the beta chain, while the remainder of the serine residue undergoes an oxidative deamination to produce ammonia and the pyruvoyl prosthetic group on the alpha chain.</text>
</comment>
<comment type="similarity">
    <text evidence="1">Belongs to the phosphatidylserine decarboxylase family. PSD-A subfamily.</text>
</comment>
<dbReference type="EC" id="4.1.1.65" evidence="1"/>
<dbReference type="EMBL" id="CP000250">
    <property type="protein sequence ID" value="ABD08063.1"/>
    <property type="molecule type" value="Genomic_DNA"/>
</dbReference>
<dbReference type="RefSeq" id="WP_011442247.1">
    <property type="nucleotide sequence ID" value="NC_007778.1"/>
</dbReference>
<dbReference type="STRING" id="316058.RPB_3367"/>
<dbReference type="KEGG" id="rpb:RPB_3367"/>
<dbReference type="eggNOG" id="COG0688">
    <property type="taxonomic scope" value="Bacteria"/>
</dbReference>
<dbReference type="HOGENOM" id="CLU_072492_0_0_5"/>
<dbReference type="OrthoDB" id="9790893at2"/>
<dbReference type="UniPathway" id="UPA00558">
    <property type="reaction ID" value="UER00616"/>
</dbReference>
<dbReference type="Proteomes" id="UP000008809">
    <property type="component" value="Chromosome"/>
</dbReference>
<dbReference type="GO" id="GO:0005886">
    <property type="term" value="C:plasma membrane"/>
    <property type="evidence" value="ECO:0007669"/>
    <property type="project" value="UniProtKB-SubCell"/>
</dbReference>
<dbReference type="GO" id="GO:0004609">
    <property type="term" value="F:phosphatidylserine decarboxylase activity"/>
    <property type="evidence" value="ECO:0007669"/>
    <property type="project" value="UniProtKB-UniRule"/>
</dbReference>
<dbReference type="GO" id="GO:0006646">
    <property type="term" value="P:phosphatidylethanolamine biosynthetic process"/>
    <property type="evidence" value="ECO:0007669"/>
    <property type="project" value="UniProtKB-UniRule"/>
</dbReference>
<dbReference type="HAMAP" id="MF_00664">
    <property type="entry name" value="PS_decarb_PSD_A"/>
    <property type="match status" value="1"/>
</dbReference>
<dbReference type="InterPro" id="IPR003817">
    <property type="entry name" value="PS_Dcarbxylase"/>
</dbReference>
<dbReference type="InterPro" id="IPR033175">
    <property type="entry name" value="PSD-A"/>
</dbReference>
<dbReference type="NCBIfam" id="NF003677">
    <property type="entry name" value="PRK05305.1-1"/>
    <property type="match status" value="1"/>
</dbReference>
<dbReference type="NCBIfam" id="NF003678">
    <property type="entry name" value="PRK05305.1-2"/>
    <property type="match status" value="1"/>
</dbReference>
<dbReference type="NCBIfam" id="NF003679">
    <property type="entry name" value="PRK05305.1-3"/>
    <property type="match status" value="1"/>
</dbReference>
<dbReference type="NCBIfam" id="NF003685">
    <property type="entry name" value="PRK05305.2-5"/>
    <property type="match status" value="1"/>
</dbReference>
<dbReference type="PANTHER" id="PTHR35809">
    <property type="entry name" value="ARCHAETIDYLSERINE DECARBOXYLASE PROENZYME-RELATED"/>
    <property type="match status" value="1"/>
</dbReference>
<dbReference type="PANTHER" id="PTHR35809:SF1">
    <property type="entry name" value="ARCHAETIDYLSERINE DECARBOXYLASE PROENZYME-RELATED"/>
    <property type="match status" value="1"/>
</dbReference>
<dbReference type="Pfam" id="PF02666">
    <property type="entry name" value="PS_Dcarbxylase"/>
    <property type="match status" value="1"/>
</dbReference>